<reference key="1">
    <citation type="submission" date="2008-10" db="EMBL/GenBank/DDBJ databases">
        <title>Genome sequence of Bacillus cereus AH187.</title>
        <authorList>
            <person name="Dodson R.J."/>
            <person name="Durkin A.S."/>
            <person name="Rosovitz M.J."/>
            <person name="Rasko D.A."/>
            <person name="Kolsto A.B."/>
            <person name="Okstad O.A."/>
            <person name="Ravel J."/>
            <person name="Sutton G."/>
        </authorList>
    </citation>
    <scope>NUCLEOTIDE SEQUENCE [LARGE SCALE GENOMIC DNA]</scope>
    <source>
        <strain>AH187</strain>
    </source>
</reference>
<protein>
    <recommendedName>
        <fullName evidence="1">UvrABC system protein C</fullName>
        <shortName evidence="1">Protein UvrC</shortName>
    </recommendedName>
    <alternativeName>
        <fullName evidence="1">Excinuclease ABC subunit C</fullName>
    </alternativeName>
</protein>
<sequence length="594" mass="68312">MHEHLKEKLAILPDQPGCYLMKDKQGTVIYVGKAKVLKNRVRSYFTGSHDGKTLRLVGEIVDFEYIVTSSNLEALILELNLIKKHDPKYNIQLKDDKTYPFIKITAEKQPRLLITRNVKKDKGKYFGPYPNAQSAHETKKLLDRMYPLRKCSNMPDKVCLYYHMGQCLAPCVKEVTEEQNKEIVDEIIKFLNGGHKEVRSELETKMYEASEKLEFERAKELRDQIAHIDAIMEKQKMIMSDLVDRDVFGYAVDKGWMCVQVFFVRKGKLIERDVSMFPIYDEPEEGFLTFIGQFYENSSHFKPKEIVVPGSIDSELVERFLEVEATQPKRGKKKDLVELANKNAKIALEEKFYLIERDEERTIKAVENLGKQLGIETPYRIEAFDNSNIQGTNPVSAMIAFIDGKPAKKEYRKYKIKTVQGPDDYESMREVVRRRYTRALKEGLPLPDLIIIDGGKGHLAAASDVLENELGLYIPMAGLVKDDKHKTSHLIIGDPPEPVMLERNSQEFYLLQRIQDEVHRFAITFHRQLHGKSVIQSALDDIPGIGDKRKKILLKHFGSLKKMKEASVTEFVEAGMPKNVAETIYSYLADKKTL</sequence>
<organism>
    <name type="scientific">Bacillus cereus (strain AH187)</name>
    <dbReference type="NCBI Taxonomy" id="405534"/>
    <lineage>
        <taxon>Bacteria</taxon>
        <taxon>Bacillati</taxon>
        <taxon>Bacillota</taxon>
        <taxon>Bacilli</taxon>
        <taxon>Bacillales</taxon>
        <taxon>Bacillaceae</taxon>
        <taxon>Bacillus</taxon>
        <taxon>Bacillus cereus group</taxon>
    </lineage>
</organism>
<feature type="chain" id="PRO_1000200568" description="UvrABC system protein C">
    <location>
        <begin position="1"/>
        <end position="594"/>
    </location>
</feature>
<feature type="domain" description="GIY-YIG" evidence="1">
    <location>
        <begin position="14"/>
        <end position="91"/>
    </location>
</feature>
<feature type="domain" description="UVR" evidence="1">
    <location>
        <begin position="196"/>
        <end position="231"/>
    </location>
</feature>
<accession>B7HRG3</accession>
<gene>
    <name evidence="1" type="primary">uvrC</name>
    <name type="ordered locus">BCAH187_A4648</name>
</gene>
<proteinExistence type="inferred from homology"/>
<name>UVRC_BACC7</name>
<evidence type="ECO:0000255" key="1">
    <source>
        <dbReference type="HAMAP-Rule" id="MF_00203"/>
    </source>
</evidence>
<keyword id="KW-0963">Cytoplasm</keyword>
<keyword id="KW-0227">DNA damage</keyword>
<keyword id="KW-0228">DNA excision</keyword>
<keyword id="KW-0234">DNA repair</keyword>
<keyword id="KW-0267">Excision nuclease</keyword>
<keyword id="KW-0742">SOS response</keyword>
<dbReference type="EMBL" id="CP001177">
    <property type="protein sequence ID" value="ACJ78802.1"/>
    <property type="molecule type" value="Genomic_DNA"/>
</dbReference>
<dbReference type="SMR" id="B7HRG3"/>
<dbReference type="KEGG" id="bcr:BCAH187_A4648"/>
<dbReference type="HOGENOM" id="CLU_014841_3_2_9"/>
<dbReference type="Proteomes" id="UP000002214">
    <property type="component" value="Chromosome"/>
</dbReference>
<dbReference type="GO" id="GO:0005737">
    <property type="term" value="C:cytoplasm"/>
    <property type="evidence" value="ECO:0007669"/>
    <property type="project" value="UniProtKB-SubCell"/>
</dbReference>
<dbReference type="GO" id="GO:0009380">
    <property type="term" value="C:excinuclease repair complex"/>
    <property type="evidence" value="ECO:0007669"/>
    <property type="project" value="InterPro"/>
</dbReference>
<dbReference type="GO" id="GO:0003677">
    <property type="term" value="F:DNA binding"/>
    <property type="evidence" value="ECO:0007669"/>
    <property type="project" value="UniProtKB-UniRule"/>
</dbReference>
<dbReference type="GO" id="GO:0009381">
    <property type="term" value="F:excinuclease ABC activity"/>
    <property type="evidence" value="ECO:0007669"/>
    <property type="project" value="UniProtKB-UniRule"/>
</dbReference>
<dbReference type="GO" id="GO:0006289">
    <property type="term" value="P:nucleotide-excision repair"/>
    <property type="evidence" value="ECO:0007669"/>
    <property type="project" value="UniProtKB-UniRule"/>
</dbReference>
<dbReference type="GO" id="GO:0009432">
    <property type="term" value="P:SOS response"/>
    <property type="evidence" value="ECO:0007669"/>
    <property type="project" value="UniProtKB-UniRule"/>
</dbReference>
<dbReference type="CDD" id="cd10434">
    <property type="entry name" value="GIY-YIG_UvrC_Cho"/>
    <property type="match status" value="1"/>
</dbReference>
<dbReference type="FunFam" id="1.10.150.20:FF:000005">
    <property type="entry name" value="UvrABC system protein C"/>
    <property type="match status" value="1"/>
</dbReference>
<dbReference type="FunFam" id="3.30.420.340:FF:000002">
    <property type="entry name" value="UvrABC system protein C"/>
    <property type="match status" value="1"/>
</dbReference>
<dbReference type="FunFam" id="3.40.1440.10:FF:000001">
    <property type="entry name" value="UvrABC system protein C"/>
    <property type="match status" value="1"/>
</dbReference>
<dbReference type="FunFam" id="4.10.860.10:FF:000002">
    <property type="entry name" value="UvrABC system protein C"/>
    <property type="match status" value="1"/>
</dbReference>
<dbReference type="Gene3D" id="1.10.150.20">
    <property type="entry name" value="5' to 3' exonuclease, C-terminal subdomain"/>
    <property type="match status" value="1"/>
</dbReference>
<dbReference type="Gene3D" id="3.40.1440.10">
    <property type="entry name" value="GIY-YIG endonuclease"/>
    <property type="match status" value="1"/>
</dbReference>
<dbReference type="Gene3D" id="4.10.860.10">
    <property type="entry name" value="UVR domain"/>
    <property type="match status" value="1"/>
</dbReference>
<dbReference type="Gene3D" id="3.30.420.340">
    <property type="entry name" value="UvrC, RNAse H endonuclease domain"/>
    <property type="match status" value="1"/>
</dbReference>
<dbReference type="HAMAP" id="MF_00203">
    <property type="entry name" value="UvrC"/>
    <property type="match status" value="1"/>
</dbReference>
<dbReference type="InterPro" id="IPR000305">
    <property type="entry name" value="GIY-YIG_endonuc"/>
</dbReference>
<dbReference type="InterPro" id="IPR035901">
    <property type="entry name" value="GIY-YIG_endonuc_sf"/>
</dbReference>
<dbReference type="InterPro" id="IPR047296">
    <property type="entry name" value="GIY-YIG_UvrC_Cho"/>
</dbReference>
<dbReference type="InterPro" id="IPR010994">
    <property type="entry name" value="RuvA_2-like"/>
</dbReference>
<dbReference type="InterPro" id="IPR001943">
    <property type="entry name" value="UVR_dom"/>
</dbReference>
<dbReference type="InterPro" id="IPR036876">
    <property type="entry name" value="UVR_dom_sf"/>
</dbReference>
<dbReference type="InterPro" id="IPR050066">
    <property type="entry name" value="UvrABC_protein_C"/>
</dbReference>
<dbReference type="InterPro" id="IPR004791">
    <property type="entry name" value="UvrC"/>
</dbReference>
<dbReference type="InterPro" id="IPR001162">
    <property type="entry name" value="UvrC_RNase_H_dom"/>
</dbReference>
<dbReference type="InterPro" id="IPR038476">
    <property type="entry name" value="UvrC_RNase_H_dom_sf"/>
</dbReference>
<dbReference type="NCBIfam" id="NF001824">
    <property type="entry name" value="PRK00558.1-5"/>
    <property type="match status" value="1"/>
</dbReference>
<dbReference type="NCBIfam" id="TIGR00194">
    <property type="entry name" value="uvrC"/>
    <property type="match status" value="1"/>
</dbReference>
<dbReference type="PANTHER" id="PTHR30562:SF1">
    <property type="entry name" value="UVRABC SYSTEM PROTEIN C"/>
    <property type="match status" value="1"/>
</dbReference>
<dbReference type="PANTHER" id="PTHR30562">
    <property type="entry name" value="UVRC/OXIDOREDUCTASE"/>
    <property type="match status" value="1"/>
</dbReference>
<dbReference type="Pfam" id="PF01541">
    <property type="entry name" value="GIY-YIG"/>
    <property type="match status" value="1"/>
</dbReference>
<dbReference type="Pfam" id="PF02151">
    <property type="entry name" value="UVR"/>
    <property type="match status" value="1"/>
</dbReference>
<dbReference type="Pfam" id="PF22920">
    <property type="entry name" value="UvrC_RNaseH"/>
    <property type="match status" value="1"/>
</dbReference>
<dbReference type="Pfam" id="PF08459">
    <property type="entry name" value="UvrC_RNaseH_dom"/>
    <property type="match status" value="1"/>
</dbReference>
<dbReference type="SMART" id="SM00465">
    <property type="entry name" value="GIYc"/>
    <property type="match status" value="1"/>
</dbReference>
<dbReference type="SUPFAM" id="SSF46600">
    <property type="entry name" value="C-terminal UvrC-binding domain of UvrB"/>
    <property type="match status" value="1"/>
</dbReference>
<dbReference type="SUPFAM" id="SSF82771">
    <property type="entry name" value="GIY-YIG endonuclease"/>
    <property type="match status" value="1"/>
</dbReference>
<dbReference type="SUPFAM" id="SSF47781">
    <property type="entry name" value="RuvA domain 2-like"/>
    <property type="match status" value="1"/>
</dbReference>
<dbReference type="PROSITE" id="PS50164">
    <property type="entry name" value="GIY_YIG"/>
    <property type="match status" value="1"/>
</dbReference>
<dbReference type="PROSITE" id="PS50151">
    <property type="entry name" value="UVR"/>
    <property type="match status" value="1"/>
</dbReference>
<dbReference type="PROSITE" id="PS50165">
    <property type="entry name" value="UVRC"/>
    <property type="match status" value="1"/>
</dbReference>
<comment type="function">
    <text evidence="1">The UvrABC repair system catalyzes the recognition and processing of DNA lesions. UvrC both incises the 5' and 3' sides of the lesion. The N-terminal half is responsible for the 3' incision and the C-terminal half is responsible for the 5' incision.</text>
</comment>
<comment type="subunit">
    <text evidence="1">Interacts with UvrB in an incision complex.</text>
</comment>
<comment type="subcellular location">
    <subcellularLocation>
        <location evidence="1">Cytoplasm</location>
    </subcellularLocation>
</comment>
<comment type="similarity">
    <text evidence="1">Belongs to the UvrC family.</text>
</comment>